<name>SIDA_SCHPO</name>
<evidence type="ECO:0000250" key="1">
    <source>
        <dbReference type="UniProtKB" id="E9QYP0"/>
    </source>
</evidence>
<evidence type="ECO:0000269" key="2">
    <source>
    </source>
</evidence>
<evidence type="ECO:0000269" key="3">
    <source>
    </source>
</evidence>
<evidence type="ECO:0000303" key="4">
    <source>
    </source>
</evidence>
<evidence type="ECO:0000305" key="5"/>
<evidence type="ECO:0000305" key="6">
    <source>
    </source>
</evidence>
<evidence type="ECO:0000312" key="7">
    <source>
        <dbReference type="PomBase" id="SPAC23G3.03"/>
    </source>
</evidence>
<accession>Q9P7T0</accession>
<sequence>MTEPLDLAIIGFGPASLSFLIALHDHSEEPLKNKKIRVFEKLPTFSWHEGMLIPGSNMQISFVKDLATPRDPTSYFTFLNYLHSHGQERLSGFLNMSTLEPSRYEYHDYLCWAASHFSKFVEYNANINKLHYDAATDLYIVGHGDTQWQAKNIIITTGCQPYIPPLYKSVDSPLIVHSSKFMSDHSQKLLRNSKHGILVVGCGQSAAEIWKHCHYSLDPKTPLAMCFRNLAPVPSDSSPFVNSLYFDSHNSHWWYNLPTEARLKGLSVGRTTNYSVVKESLLEEMFKECYLQKLRYGQEFHQIMGDTDIQSIKNEGDHLVVQLTSQMDKSKKPETRKIDVLYVATGYDHESFDVLMSSLFPNSQGAQISEEYCVLNAPSKQGKVYVAGITSNQHGIGETLLSWAAIRAGGLAKELFGPSKPTARVPASYLN</sequence>
<feature type="chain" id="PRO_0000352807" description="L-ornithine N(5)-monooxygenase">
    <location>
        <begin position="1"/>
        <end position="431"/>
    </location>
</feature>
<feature type="binding site" evidence="1">
    <location>
        <begin position="40"/>
        <end position="48"/>
    </location>
    <ligand>
        <name>FAD</name>
        <dbReference type="ChEBI" id="CHEBI:57692"/>
    </ligand>
</feature>
<feature type="binding site" evidence="1">
    <location>
        <position position="59"/>
    </location>
    <ligand>
        <name>FAD</name>
        <dbReference type="ChEBI" id="CHEBI:57692"/>
    </ligand>
</feature>
<feature type="binding site" evidence="1">
    <location>
        <position position="64"/>
    </location>
    <ligand>
        <name>substrate</name>
    </ligand>
</feature>
<feature type="binding site" evidence="1">
    <location>
        <begin position="202"/>
        <end position="205"/>
    </location>
    <ligand>
        <name>NADP(+)</name>
        <dbReference type="ChEBI" id="CHEBI:58349"/>
    </ligand>
</feature>
<feature type="binding site" evidence="1">
    <location>
        <position position="228"/>
    </location>
    <ligand>
        <name>NADP(+)</name>
        <dbReference type="ChEBI" id="CHEBI:58349"/>
    </ligand>
</feature>
<feature type="binding site" evidence="1">
    <location>
        <begin position="242"/>
        <end position="245"/>
    </location>
    <ligand>
        <name>substrate</name>
    </ligand>
</feature>
<feature type="binding site" evidence="1">
    <location>
        <begin position="273"/>
        <end position="275"/>
    </location>
    <ligand>
        <name>NADP(+)</name>
        <dbReference type="ChEBI" id="CHEBI:58349"/>
    </ligand>
</feature>
<feature type="binding site" evidence="1">
    <location>
        <position position="273"/>
    </location>
    <ligand>
        <name>substrate</name>
    </ligand>
</feature>
<feature type="binding site" evidence="1">
    <location>
        <begin position="399"/>
        <end position="401"/>
    </location>
    <ligand>
        <name>FAD</name>
        <dbReference type="ChEBI" id="CHEBI:57692"/>
    </ligand>
</feature>
<feature type="binding site" evidence="1">
    <location>
        <position position="402"/>
    </location>
    <ligand>
        <name>substrate</name>
    </ligand>
</feature>
<reference key="1">
    <citation type="journal article" date="2002" name="Nature">
        <title>The genome sequence of Schizosaccharomyces pombe.</title>
        <authorList>
            <person name="Wood V."/>
            <person name="Gwilliam R."/>
            <person name="Rajandream M.A."/>
            <person name="Lyne M.H."/>
            <person name="Lyne R."/>
            <person name="Stewart A."/>
            <person name="Sgouros J.G."/>
            <person name="Peat N."/>
            <person name="Hayles J."/>
            <person name="Baker S.G."/>
            <person name="Basham D."/>
            <person name="Bowman S."/>
            <person name="Brooks K."/>
            <person name="Brown D."/>
            <person name="Brown S."/>
            <person name="Chillingworth T."/>
            <person name="Churcher C.M."/>
            <person name="Collins M."/>
            <person name="Connor R."/>
            <person name="Cronin A."/>
            <person name="Davis P."/>
            <person name="Feltwell T."/>
            <person name="Fraser A."/>
            <person name="Gentles S."/>
            <person name="Goble A."/>
            <person name="Hamlin N."/>
            <person name="Harris D.E."/>
            <person name="Hidalgo J."/>
            <person name="Hodgson G."/>
            <person name="Holroyd S."/>
            <person name="Hornsby T."/>
            <person name="Howarth S."/>
            <person name="Huckle E.J."/>
            <person name="Hunt S."/>
            <person name="Jagels K."/>
            <person name="James K.D."/>
            <person name="Jones L."/>
            <person name="Jones M."/>
            <person name="Leather S."/>
            <person name="McDonald S."/>
            <person name="McLean J."/>
            <person name="Mooney P."/>
            <person name="Moule S."/>
            <person name="Mungall K.L."/>
            <person name="Murphy L.D."/>
            <person name="Niblett D."/>
            <person name="Odell C."/>
            <person name="Oliver K."/>
            <person name="O'Neil S."/>
            <person name="Pearson D."/>
            <person name="Quail M.A."/>
            <person name="Rabbinowitsch E."/>
            <person name="Rutherford K.M."/>
            <person name="Rutter S."/>
            <person name="Saunders D."/>
            <person name="Seeger K."/>
            <person name="Sharp S."/>
            <person name="Skelton J."/>
            <person name="Simmonds M.N."/>
            <person name="Squares R."/>
            <person name="Squares S."/>
            <person name="Stevens K."/>
            <person name="Taylor K."/>
            <person name="Taylor R.G."/>
            <person name="Tivey A."/>
            <person name="Walsh S.V."/>
            <person name="Warren T."/>
            <person name="Whitehead S."/>
            <person name="Woodward J.R."/>
            <person name="Volckaert G."/>
            <person name="Aert R."/>
            <person name="Robben J."/>
            <person name="Grymonprez B."/>
            <person name="Weltjens I."/>
            <person name="Vanstreels E."/>
            <person name="Rieger M."/>
            <person name="Schaefer M."/>
            <person name="Mueller-Auer S."/>
            <person name="Gabel C."/>
            <person name="Fuchs M."/>
            <person name="Duesterhoeft A."/>
            <person name="Fritzc C."/>
            <person name="Holzer E."/>
            <person name="Moestl D."/>
            <person name="Hilbert H."/>
            <person name="Borzym K."/>
            <person name="Langer I."/>
            <person name="Beck A."/>
            <person name="Lehrach H."/>
            <person name="Reinhardt R."/>
            <person name="Pohl T.M."/>
            <person name="Eger P."/>
            <person name="Zimmermann W."/>
            <person name="Wedler H."/>
            <person name="Wambutt R."/>
            <person name="Purnelle B."/>
            <person name="Goffeau A."/>
            <person name="Cadieu E."/>
            <person name="Dreano S."/>
            <person name="Gloux S."/>
            <person name="Lelaure V."/>
            <person name="Mottier S."/>
            <person name="Galibert F."/>
            <person name="Aves S.J."/>
            <person name="Xiang Z."/>
            <person name="Hunt C."/>
            <person name="Moore K."/>
            <person name="Hurst S.M."/>
            <person name="Lucas M."/>
            <person name="Rochet M."/>
            <person name="Gaillardin C."/>
            <person name="Tallada V.A."/>
            <person name="Garzon A."/>
            <person name="Thode G."/>
            <person name="Daga R.R."/>
            <person name="Cruzado L."/>
            <person name="Jimenez J."/>
            <person name="Sanchez M."/>
            <person name="del Rey F."/>
            <person name="Benito J."/>
            <person name="Dominguez A."/>
            <person name="Revuelta J.L."/>
            <person name="Moreno S."/>
            <person name="Armstrong J."/>
            <person name="Forsburg S.L."/>
            <person name="Cerutti L."/>
            <person name="Lowe T."/>
            <person name="McCombie W.R."/>
            <person name="Paulsen I."/>
            <person name="Potashkin J."/>
            <person name="Shpakovski G.V."/>
            <person name="Ussery D."/>
            <person name="Barrell B.G."/>
            <person name="Nurse P."/>
        </authorList>
    </citation>
    <scope>NUCLEOTIDE SEQUENCE [LARGE SCALE GENOMIC DNA]</scope>
    <source>
        <strain>972 / ATCC 24843</strain>
    </source>
</reference>
<reference key="2">
    <citation type="journal article" date="2004" name="BioMetals">
        <title>Ferrichrome in Schizosaccharomyces pombe -- an iron transport and iron storage compound.</title>
        <authorList>
            <person name="Schrettl M."/>
            <person name="Winkelmann G."/>
            <person name="Haas H."/>
        </authorList>
    </citation>
    <scope>FUNCTION</scope>
    <scope>PATHWAY</scope>
</reference>
<reference key="3">
    <citation type="journal article" date="2006" name="Nat. Biotechnol.">
        <title>ORFeome cloning and global analysis of protein localization in the fission yeast Schizosaccharomyces pombe.</title>
        <authorList>
            <person name="Matsuyama A."/>
            <person name="Arai R."/>
            <person name="Yashiroda Y."/>
            <person name="Shirai A."/>
            <person name="Kamata A."/>
            <person name="Sekido S."/>
            <person name="Kobayashi Y."/>
            <person name="Hashimoto A."/>
            <person name="Hamamoto M."/>
            <person name="Hiraoka Y."/>
            <person name="Horinouchi S."/>
            <person name="Yoshida M."/>
        </authorList>
    </citation>
    <scope>SUBCELLULAR LOCATION [LARGE SCALE ANALYSIS]</scope>
</reference>
<gene>
    <name evidence="7" type="primary">sib2</name>
    <name evidence="7" type="ORF">SPAC23G3.03</name>
</gene>
<keyword id="KW-0963">Cytoplasm</keyword>
<keyword id="KW-0274">FAD</keyword>
<keyword id="KW-0285">Flavoprotein</keyword>
<keyword id="KW-0503">Monooxygenase</keyword>
<keyword id="KW-0521">NADP</keyword>
<keyword id="KW-0539">Nucleus</keyword>
<keyword id="KW-0560">Oxidoreductase</keyword>
<keyword id="KW-1185">Reference proteome</keyword>
<comment type="function">
    <text evidence="1 6">Catalyzes the conversion of L-ornithine to N(5)-hydroxyornithine, the first step in the biosynthesis of all hydroxamate-containing siderophores, such as ferrichrome.</text>
</comment>
<comment type="catalytic activity">
    <reaction evidence="1">
        <text>L-ornithine + NADPH + O2 = N(5)-hydroxy-L-ornithine + NADP(+) + H2O</text>
        <dbReference type="Rhea" id="RHEA:41508"/>
        <dbReference type="ChEBI" id="CHEBI:15377"/>
        <dbReference type="ChEBI" id="CHEBI:15379"/>
        <dbReference type="ChEBI" id="CHEBI:46911"/>
        <dbReference type="ChEBI" id="CHEBI:57783"/>
        <dbReference type="ChEBI" id="CHEBI:58349"/>
        <dbReference type="ChEBI" id="CHEBI:78275"/>
        <dbReference type="EC" id="1.14.13.196"/>
    </reaction>
</comment>
<comment type="catalytic activity">
    <reaction evidence="1">
        <text>L-ornithine + NADH + O2 = N(5)-hydroxy-L-ornithine + NAD(+) + H2O</text>
        <dbReference type="Rhea" id="RHEA:41512"/>
        <dbReference type="ChEBI" id="CHEBI:15377"/>
        <dbReference type="ChEBI" id="CHEBI:15379"/>
        <dbReference type="ChEBI" id="CHEBI:46911"/>
        <dbReference type="ChEBI" id="CHEBI:57540"/>
        <dbReference type="ChEBI" id="CHEBI:57945"/>
        <dbReference type="ChEBI" id="CHEBI:78275"/>
        <dbReference type="EC" id="1.14.13.196"/>
    </reaction>
</comment>
<comment type="cofactor">
    <cofactor evidence="1">
        <name>FAD</name>
        <dbReference type="ChEBI" id="CHEBI:57692"/>
    </cofactor>
    <text evidence="1">Binds 1 FAD per subunit.</text>
</comment>
<comment type="pathway">
    <text evidence="2">Siderophore biosynthesis; ferrichrome biosynthesis.</text>
</comment>
<comment type="subcellular location">
    <subcellularLocation>
        <location evidence="3">Cytoplasm</location>
    </subcellularLocation>
    <subcellularLocation>
        <location evidence="3">Nucleus</location>
    </subcellularLocation>
</comment>
<comment type="similarity">
    <text evidence="5">Belongs to the lysine N(6)-hydroxylase/L-ornithine N(5)-oxygenase family.</text>
</comment>
<protein>
    <recommendedName>
        <fullName evidence="4">L-ornithine N(5)-monooxygenase</fullName>
        <shortName evidence="1">OMO</shortName>
        <ecNumber evidence="1">1.14.13.196</ecNumber>
    </recommendedName>
    <alternativeName>
        <fullName evidence="1">L-ornithine N(5)-oxygenase</fullName>
    </alternativeName>
</protein>
<dbReference type="EC" id="1.14.13.196" evidence="1"/>
<dbReference type="EMBL" id="CU329670">
    <property type="protein sequence ID" value="CAB72228.1"/>
    <property type="molecule type" value="Genomic_DNA"/>
</dbReference>
<dbReference type="PIR" id="T50177">
    <property type="entry name" value="T50177"/>
</dbReference>
<dbReference type="RefSeq" id="NP_593103.1">
    <property type="nucleotide sequence ID" value="NM_001018500.2"/>
</dbReference>
<dbReference type="SMR" id="Q9P7T0"/>
<dbReference type="BioGRID" id="278322">
    <property type="interactions" value="10"/>
</dbReference>
<dbReference type="STRING" id="284812.Q9P7T0"/>
<dbReference type="iPTMnet" id="Q9P7T0"/>
<dbReference type="PaxDb" id="4896-SPAC23G3.03.1"/>
<dbReference type="EnsemblFungi" id="SPAC23G3.03.1">
    <property type="protein sequence ID" value="SPAC23G3.03.1:pep"/>
    <property type="gene ID" value="SPAC23G3.03"/>
</dbReference>
<dbReference type="PomBase" id="SPAC23G3.03">
    <property type="gene designation" value="sib2"/>
</dbReference>
<dbReference type="VEuPathDB" id="FungiDB:SPAC23G3.03"/>
<dbReference type="eggNOG" id="KOG1399">
    <property type="taxonomic scope" value="Eukaryota"/>
</dbReference>
<dbReference type="HOGENOM" id="CLU_020931_2_0_1"/>
<dbReference type="InParanoid" id="Q9P7T0"/>
<dbReference type="OMA" id="YTRYFHA"/>
<dbReference type="PhylomeDB" id="Q9P7T0"/>
<dbReference type="UniPathway" id="UPA00783"/>
<dbReference type="PRO" id="PR:Q9P7T0"/>
<dbReference type="Proteomes" id="UP000002485">
    <property type="component" value="Chromosome I"/>
</dbReference>
<dbReference type="GO" id="GO:0005737">
    <property type="term" value="C:cytoplasm"/>
    <property type="evidence" value="ECO:0007005"/>
    <property type="project" value="PomBase"/>
</dbReference>
<dbReference type="GO" id="GO:0005829">
    <property type="term" value="C:cytosol"/>
    <property type="evidence" value="ECO:0007005"/>
    <property type="project" value="PomBase"/>
</dbReference>
<dbReference type="GO" id="GO:0005634">
    <property type="term" value="C:nucleus"/>
    <property type="evidence" value="ECO:0007005"/>
    <property type="project" value="PomBase"/>
</dbReference>
<dbReference type="GO" id="GO:0050660">
    <property type="term" value="F:flavin adenine dinucleotide binding"/>
    <property type="evidence" value="ECO:0000304"/>
    <property type="project" value="PomBase"/>
</dbReference>
<dbReference type="GO" id="GO:0050661">
    <property type="term" value="F:NADP binding"/>
    <property type="evidence" value="ECO:0000304"/>
    <property type="project" value="PomBase"/>
</dbReference>
<dbReference type="GO" id="GO:0031172">
    <property type="term" value="F:ornithine N5-monooxygenase activity"/>
    <property type="evidence" value="ECO:0000304"/>
    <property type="project" value="PomBase"/>
</dbReference>
<dbReference type="GO" id="GO:0010106">
    <property type="term" value="P:cellular response to iron ion starvation"/>
    <property type="evidence" value="ECO:0000316"/>
    <property type="project" value="PomBase"/>
</dbReference>
<dbReference type="GO" id="GO:0031169">
    <property type="term" value="P:ferrichrome biosynthetic process"/>
    <property type="evidence" value="ECO:0000316"/>
    <property type="project" value="PomBase"/>
</dbReference>
<dbReference type="GO" id="GO:0006879">
    <property type="term" value="P:intracellular iron ion homeostasis"/>
    <property type="evidence" value="ECO:0000318"/>
    <property type="project" value="GO_Central"/>
</dbReference>
<dbReference type="FunFam" id="3.50.50.60:FF:000466">
    <property type="entry name" value="L-ornithine N(5)-monooxygenase"/>
    <property type="match status" value="1"/>
</dbReference>
<dbReference type="Gene3D" id="3.50.50.60">
    <property type="entry name" value="FAD/NAD(P)-binding domain"/>
    <property type="match status" value="1"/>
</dbReference>
<dbReference type="InterPro" id="IPR036188">
    <property type="entry name" value="FAD/NAD-bd_sf"/>
</dbReference>
<dbReference type="InterPro" id="IPR025700">
    <property type="entry name" value="Lys/Orn_oxygenase"/>
</dbReference>
<dbReference type="PANTHER" id="PTHR42802:SF1">
    <property type="entry name" value="L-ORNITHINE N(5)-MONOOXYGENASE"/>
    <property type="match status" value="1"/>
</dbReference>
<dbReference type="PANTHER" id="PTHR42802">
    <property type="entry name" value="MONOOXYGENASE"/>
    <property type="match status" value="1"/>
</dbReference>
<dbReference type="Pfam" id="PF13434">
    <property type="entry name" value="Lys_Orn_oxgnase"/>
    <property type="match status" value="1"/>
</dbReference>
<dbReference type="SUPFAM" id="SSF51905">
    <property type="entry name" value="FAD/NAD(P)-binding domain"/>
    <property type="match status" value="1"/>
</dbReference>
<organism>
    <name type="scientific">Schizosaccharomyces pombe (strain 972 / ATCC 24843)</name>
    <name type="common">Fission yeast</name>
    <dbReference type="NCBI Taxonomy" id="284812"/>
    <lineage>
        <taxon>Eukaryota</taxon>
        <taxon>Fungi</taxon>
        <taxon>Dikarya</taxon>
        <taxon>Ascomycota</taxon>
        <taxon>Taphrinomycotina</taxon>
        <taxon>Schizosaccharomycetes</taxon>
        <taxon>Schizosaccharomycetales</taxon>
        <taxon>Schizosaccharomycetaceae</taxon>
        <taxon>Schizosaccharomyces</taxon>
    </lineage>
</organism>
<proteinExistence type="inferred from homology"/>